<protein>
    <recommendedName>
        <fullName>Uncharacterized protein 91</fullName>
    </recommendedName>
</protein>
<reference key="1">
    <citation type="journal article" date="2001" name="Virology">
        <title>Sequences and replication of genomes of the archaeal rudiviruses SIRV1 and SIRV2: relationships to the archaeal lipothrixvirus SIFV and some eukaryal viruses.</title>
        <authorList>
            <person name="Peng X."/>
            <person name="Blum H."/>
            <person name="She Q."/>
            <person name="Mallok S."/>
            <person name="Bruegger K."/>
            <person name="Garrett R.A."/>
            <person name="Zillig W."/>
            <person name="Prangishvili D."/>
        </authorList>
    </citation>
    <scope>NUCLEOTIDE SEQUENCE [LARGE SCALE GENOMIC DNA]</scope>
    <source>
        <strain>Isolate variant VIII</strain>
    </source>
</reference>
<organismHost>
    <name type="scientific">Saccharolobus islandicus</name>
    <name type="common">Sulfolobus islandicus</name>
    <dbReference type="NCBI Taxonomy" id="43080"/>
</organismHost>
<feature type="chain" id="PRO_0000342317" description="Uncharacterized protein 91">
    <location>
        <begin position="1"/>
        <end position="91"/>
    </location>
</feature>
<accession>Q8QL39</accession>
<sequence length="91" mass="10700">MTDYKNGIKKLLQKCFSDKSIDVIFMSCNNLSPHKDYMIIDPETKYYIGYILTNGIKIPFIAEVWHNNTTRIYLDPRKNFYLALFIGDLNV</sequence>
<gene>
    <name type="ORF">91</name>
</gene>
<organism>
    <name type="scientific">Sulfolobus islandicus rod-shaped virus 1</name>
    <name type="common">SIRV-1</name>
    <name type="synonym">Sulfolobus virus SIRV-1</name>
    <dbReference type="NCBI Taxonomy" id="157898"/>
    <lineage>
        <taxon>Viruses</taxon>
        <taxon>Adnaviria</taxon>
        <taxon>Zilligvirae</taxon>
        <taxon>Taleaviricota</taxon>
        <taxon>Tokiviricetes</taxon>
        <taxon>Ligamenvirales</taxon>
        <taxon>Rudiviridae</taxon>
        <taxon>Icerudivirus</taxon>
        <taxon>Icerudivirus SIRV1</taxon>
    </lineage>
</organism>
<name>Y91_SIRV1</name>
<proteinExistence type="predicted"/>
<dbReference type="EMBL" id="AJ414696">
    <property type="protein sequence ID" value="CAC93970.1"/>
    <property type="molecule type" value="Genomic_DNA"/>
</dbReference>
<dbReference type="RefSeq" id="NP_666603.1">
    <property type="nucleotide sequence ID" value="NC_004087.1"/>
</dbReference>
<dbReference type="KEGG" id="vg:951390"/>
<dbReference type="OrthoDB" id="33096at10239"/>
<dbReference type="Proteomes" id="UP000002270">
    <property type="component" value="Genome"/>
</dbReference>
<dbReference type="InterPro" id="IPR035194">
    <property type="entry name" value="DUF5461"/>
</dbReference>
<dbReference type="Pfam" id="PF17545">
    <property type="entry name" value="DUF5461"/>
    <property type="match status" value="1"/>
</dbReference>
<keyword id="KW-1185">Reference proteome</keyword>